<gene>
    <name type="primary">ropA</name>
</gene>
<proteinExistence type="evidence at protein level"/>
<name>OM3A_RHILV</name>
<sequence length="366" mass="38970">MNIRMVLLASAAAFAASTPVLAADAIVAAEPEPVEYVRVCDAYGTGYFYIPGTETCLKIEGYIRFQVNVGDNPGGDNDSDWDAVTAVRFSSRKSDTEYGPLTGVIVMQFNADNASDQDAILDSAYLDVAGFRAGLFYSWWDDGLSGETDDIGSVVTLHNSIRYQYESGTFYAGLSVDELEDGVYQGTFTPGVIPGTTDFTADDGPNNVGVAFGIGGTAGAFSYQVTGGWDVDNEDGAIRAMGTVEIGPGTFGLAGVYSSGPNSYYSSAEWAVAAEYAIKATDKLKITPGRWHGHVPEDFDGLGDAWKVGLTVDYQIVENFYAKASVQYLDPQDGEDSTSGYFACSVRSNHLVDAPGLRIGSTTISF</sequence>
<protein>
    <recommendedName>
        <fullName>Outer membrane protein IIIA</fullName>
        <shortName>OMPIIIA</shortName>
    </recommendedName>
</protein>
<feature type="signal peptide" evidence="2">
    <location>
        <begin position="1"/>
        <end position="22"/>
    </location>
</feature>
<feature type="chain" id="PRO_0000021886" description="Outer membrane protein IIIA">
    <location>
        <begin position="23"/>
        <end position="366"/>
    </location>
</feature>
<accession>Q05811</accession>
<reference key="1">
    <citation type="journal article" date="1992" name="J. Bacteriol.">
        <title>Cloning, nucleotide sequencing, and expression in Escherichia coli of a Rhizobium leguminosarum gene encoding a symbiotically repressed outer membrane protein.</title>
        <authorList>
            <person name="de Maagd R.A."/>
            <person name="Mulders I.H.M."/>
            <person name="Canter Cremers H.C.J."/>
            <person name="Lugtenberg B.J.J."/>
        </authorList>
    </citation>
    <scope>NUCLEOTIDE SEQUENCE [GENOMIC DNA]</scope>
    <scope>PROTEIN SEQUENCE OF 23-31</scope>
    <scope>SUBUNIT</scope>
    <scope>SUBCELLULAR LOCATION</scope>
    <scope>DEVELOPMENTAL STAGE</scope>
    <source>
        <strain>248</strain>
    </source>
</reference>
<evidence type="ECO:0000250" key="1">
    <source>
        <dbReference type="UniProtKB" id="B2SAB9"/>
    </source>
</evidence>
<evidence type="ECO:0000269" key="2">
    <source>
    </source>
</evidence>
<evidence type="ECO:0000305" key="3"/>
<organism>
    <name type="scientific">Rhizobium leguminosarum bv. viciae</name>
    <dbReference type="NCBI Taxonomy" id="387"/>
    <lineage>
        <taxon>Bacteria</taxon>
        <taxon>Pseudomonadati</taxon>
        <taxon>Pseudomonadota</taxon>
        <taxon>Alphaproteobacteria</taxon>
        <taxon>Hyphomicrobiales</taxon>
        <taxon>Rhizobiaceae</taxon>
        <taxon>Rhizobium/Agrobacterium group</taxon>
        <taxon>Rhizobium</taxon>
    </lineage>
</organism>
<keyword id="KW-0998">Cell outer membrane</keyword>
<keyword id="KW-0903">Direct protein sequencing</keyword>
<keyword id="KW-0406">Ion transport</keyword>
<keyword id="KW-0472">Membrane</keyword>
<keyword id="KW-0626">Porin</keyword>
<keyword id="KW-0732">Signal</keyword>
<keyword id="KW-0812">Transmembrane</keyword>
<keyword id="KW-1134">Transmembrane beta strand</keyword>
<keyword id="KW-0813">Transport</keyword>
<comment type="function">
    <text evidence="1">May act as an outer membrane pore.</text>
</comment>
<comment type="subunit">
    <text evidence="2">Forms calcium-stabilized oligomers.</text>
</comment>
<comment type="subcellular location">
    <subcellularLocation>
        <location evidence="2">Cell outer membrane</location>
    </subcellularLocation>
</comment>
<comment type="developmental stage">
    <text evidence="2">Repressed in the bacteroid form during symbiosis.</text>
</comment>
<comment type="PTM">
    <text>Attached covalently to peptidoglycan.</text>
</comment>
<comment type="similarity">
    <text evidence="3">Belongs to the alphaproteobacteria porin family.</text>
</comment>
<dbReference type="EMBL" id="M69214">
    <property type="protein sequence ID" value="AAA20488.1"/>
    <property type="status" value="ALT_SEQ"/>
    <property type="molecule type" value="Genomic_DNA"/>
</dbReference>
<dbReference type="PIR" id="A43303">
    <property type="entry name" value="A43303"/>
</dbReference>
<dbReference type="TCDB" id="1.B.70.1.2">
    <property type="family name" value="the outer membrane channel (omc) family"/>
</dbReference>
<dbReference type="GO" id="GO:0009279">
    <property type="term" value="C:cell outer membrane"/>
    <property type="evidence" value="ECO:0007669"/>
    <property type="project" value="UniProtKB-SubCell"/>
</dbReference>
<dbReference type="GO" id="GO:0046930">
    <property type="term" value="C:pore complex"/>
    <property type="evidence" value="ECO:0007669"/>
    <property type="project" value="UniProtKB-KW"/>
</dbReference>
<dbReference type="GO" id="GO:0015288">
    <property type="term" value="F:porin activity"/>
    <property type="evidence" value="ECO:0007669"/>
    <property type="project" value="UniProtKB-KW"/>
</dbReference>
<dbReference type="GO" id="GO:0006811">
    <property type="term" value="P:monoatomic ion transport"/>
    <property type="evidence" value="ECO:0007669"/>
    <property type="project" value="UniProtKB-KW"/>
</dbReference>
<dbReference type="InterPro" id="IPR003684">
    <property type="entry name" value="Porin_alphabac"/>
</dbReference>
<dbReference type="Pfam" id="PF02530">
    <property type="entry name" value="Porin_2"/>
    <property type="match status" value="1"/>
</dbReference>
<dbReference type="SUPFAM" id="SSF56935">
    <property type="entry name" value="Porins"/>
    <property type="match status" value="1"/>
</dbReference>